<protein>
    <recommendedName>
        <fullName>28S rRNA (uridine-N(3))-methyltransferase</fullName>
        <ecNumber evidence="1">2.1.1.-</ecNumber>
    </recommendedName>
    <alternativeName>
        <fullName evidence="1">Centromere protein 32</fullName>
        <shortName evidence="1">CENP-32</shortName>
    </alternativeName>
    <alternativeName>
        <fullName evidence="1">Kinetochore-associated protein</fullName>
    </alternativeName>
    <alternativeName>
        <fullName evidence="4">Methyltransferase C9orf114 homolog</fullName>
    </alternativeName>
    <alternativeName>
        <fullName evidence="5">SPOUT domain-containing methyltransferase 1</fullName>
    </alternativeName>
</protein>
<feature type="chain" id="PRO_0000238469" description="28S rRNA (uridine-N(3))-methyltransferase">
    <location>
        <begin position="1"/>
        <end position="385"/>
    </location>
</feature>
<feature type="region of interest" description="Disordered" evidence="2">
    <location>
        <begin position="1"/>
        <end position="35"/>
    </location>
</feature>
<feature type="region of interest" description="Disordered" evidence="2">
    <location>
        <begin position="47"/>
        <end position="72"/>
    </location>
</feature>
<feature type="compositionally biased region" description="Basic and acidic residues" evidence="2">
    <location>
        <begin position="15"/>
        <end position="35"/>
    </location>
</feature>
<feature type="compositionally biased region" description="Basic and acidic residues" evidence="2">
    <location>
        <begin position="47"/>
        <end position="58"/>
    </location>
</feature>
<feature type="binding site" evidence="1">
    <location>
        <position position="293"/>
    </location>
    <ligand>
        <name>S-adenosyl-L-methionine</name>
        <dbReference type="ChEBI" id="CHEBI:59789"/>
    </ligand>
</feature>
<feature type="binding site" evidence="1">
    <location>
        <position position="313"/>
    </location>
    <ligand>
        <name>S-adenosyl-L-methionine</name>
        <dbReference type="ChEBI" id="CHEBI:59789"/>
    </ligand>
</feature>
<feature type="binding site" evidence="1">
    <location>
        <position position="342"/>
    </location>
    <ligand>
        <name>S-adenosyl-L-methionine</name>
        <dbReference type="ChEBI" id="CHEBI:59789"/>
    </ligand>
</feature>
<feature type="binding site" evidence="1">
    <location>
        <position position="343"/>
    </location>
    <ligand>
        <name>S-adenosyl-L-methionine</name>
        <dbReference type="ChEBI" id="CHEBI:59789"/>
    </ligand>
</feature>
<feature type="splice variant" id="VSP_018611" description="In isoform 2." evidence="3">
    <location>
        <begin position="1"/>
        <end position="40"/>
    </location>
</feature>
<feature type="sequence conflict" description="In Ref. 1; BAC32613." evidence="4" ref="1">
    <original>G</original>
    <variation>C</variation>
    <location>
        <position position="258"/>
    </location>
</feature>
<keyword id="KW-0025">Alternative splicing</keyword>
<keyword id="KW-0131">Cell cycle</keyword>
<keyword id="KW-0132">Cell division</keyword>
<keyword id="KW-0137">Centromere</keyword>
<keyword id="KW-0158">Chromosome</keyword>
<keyword id="KW-0963">Cytoplasm</keyword>
<keyword id="KW-0206">Cytoskeleton</keyword>
<keyword id="KW-0995">Kinetochore</keyword>
<keyword id="KW-0489">Methyltransferase</keyword>
<keyword id="KW-0498">Mitosis</keyword>
<keyword id="KW-1185">Reference proteome</keyword>
<keyword id="KW-0698">rRNA processing</keyword>
<keyword id="KW-0949">S-adenosyl-L-methionine</keyword>
<keyword id="KW-0808">Transferase</keyword>
<gene>
    <name evidence="5" type="primary">Spout1</name>
    <name type="synonym">D2Wsu81e</name>
</gene>
<comment type="function">
    <text evidence="1">S-adenosyl-L-methionine-dependent methyltransferase that specifically methylates the N3 position of a uridine in 28S rRNA. Required for association of the centrosomes with the poles of the bipolar mitotic spindle during metaphase. Also involved in chromosome alignment. May promote centrosome maturation probably by recruiting A-kinase anchor protein AKAP9 to centrosomes in early mitosis. Binds specifically to miRNA MIR145 hairpin, regulates MIR145 expression at a postranscriptional level.</text>
</comment>
<comment type="catalytic activity">
    <reaction evidence="1">
        <text>uridine in 28S rRNA + S-adenosyl-L-methionine = N(3)-methyluridine in 28S rRNA + S-adenosyl-L-homocysteine + H(+)</text>
        <dbReference type="Rhea" id="RHEA:83635"/>
        <dbReference type="Rhea" id="RHEA-COMP:20178"/>
        <dbReference type="Rhea" id="RHEA-COMP:20181"/>
        <dbReference type="ChEBI" id="CHEBI:15378"/>
        <dbReference type="ChEBI" id="CHEBI:57856"/>
        <dbReference type="ChEBI" id="CHEBI:59789"/>
        <dbReference type="ChEBI" id="CHEBI:65315"/>
        <dbReference type="ChEBI" id="CHEBI:74502"/>
    </reaction>
    <physiologicalReaction direction="left-to-right" evidence="1">
        <dbReference type="Rhea" id="RHEA:83636"/>
    </physiologicalReaction>
</comment>
<comment type="subunit">
    <text evidence="1">Interacts with INCA1.</text>
</comment>
<comment type="subcellular location">
    <subcellularLocation>
        <location evidence="1">Cytoplasm</location>
        <location evidence="1">Cytoskeleton</location>
        <location evidence="1">Spindle</location>
    </subcellularLocation>
    <subcellularLocation>
        <location evidence="1">Chromosome</location>
        <location evidence="1">Centromere</location>
        <location evidence="1">Kinetochore</location>
    </subcellularLocation>
    <subcellularLocation>
        <location evidence="1">Cytoplasm</location>
        <location evidence="1">Cytoskeleton</location>
        <location evidence="1">Microtubule organizing center</location>
        <location evidence="1">Centrosome</location>
    </subcellularLocation>
    <text evidence="1">Associated with the outer kinetochore.</text>
</comment>
<comment type="alternative products">
    <event type="alternative splicing"/>
    <isoform>
        <id>Q3UHX9-1</id>
        <name>1</name>
        <sequence type="displayed"/>
    </isoform>
    <isoform>
        <id>Q3UHX9-2</id>
        <name>2</name>
        <sequence type="described" ref="VSP_018611"/>
    </isoform>
</comment>
<comment type="similarity">
    <text evidence="4">Belongs to the class IV-like SAM-binding methyltransferase superfamily.</text>
</comment>
<accession>Q3UHX9</accession>
<accession>Q8BQY9</accession>
<evidence type="ECO:0000250" key="1">
    <source>
        <dbReference type="UniProtKB" id="Q5T280"/>
    </source>
</evidence>
<evidence type="ECO:0000256" key="2">
    <source>
        <dbReference type="SAM" id="MobiDB-lite"/>
    </source>
</evidence>
<evidence type="ECO:0000303" key="3">
    <source>
    </source>
</evidence>
<evidence type="ECO:0000305" key="4"/>
<evidence type="ECO:0000312" key="5">
    <source>
        <dbReference type="MGI" id="MGI:106544"/>
    </source>
</evidence>
<sequence>MAERPRKRPCGPGEHGQRVEWRKWKQQKKEEKKKWKDLKIMKKLERQRAQEEEAKRQEEEEEAAAQRSNQGRPYTLSVALPGSILDNAQSPELRTYLAGQIARACTIFCVDEIVVFDEEGQDTKSVEGEFRGVGKKGQACVQLARILQYLECPQYLRKAFFPKHQDLQFAGILNPLDSPHHMRQDEESEFREGVVVDRPTKAGHGSLVNCGMKKEVKIDKKLDPGLRVTVRLNQQQLPECKTYKGTVVSSQDPRTKAGLYWGYTVRLASCLSAVFAEAPFQDGYDLTIGTSERGSDVASAQLPSFRHALVVFGGLQGLEAAVDADPNLEVADPSVLFDFYVNTCLSQGSRTIRTEEAILISLAALQPGLTQVGSRPASPLSGPRM</sequence>
<name>SPOUT_MOUSE</name>
<dbReference type="EC" id="2.1.1.-" evidence="1"/>
<dbReference type="EMBL" id="AK046148">
    <property type="protein sequence ID" value="BAC32613.1"/>
    <property type="molecule type" value="mRNA"/>
</dbReference>
<dbReference type="EMBL" id="AK147162">
    <property type="protein sequence ID" value="BAE27727.1"/>
    <property type="molecule type" value="mRNA"/>
</dbReference>
<dbReference type="CCDS" id="CCDS15873.2">
    <molecule id="Q3UHX9-1"/>
</dbReference>
<dbReference type="RefSeq" id="NP_766248.3">
    <molecule id="Q3UHX9-1"/>
    <property type="nucleotide sequence ID" value="NM_172660.4"/>
</dbReference>
<dbReference type="SMR" id="Q3UHX9"/>
<dbReference type="BioGRID" id="230664">
    <property type="interactions" value="32"/>
</dbReference>
<dbReference type="FunCoup" id="Q3UHX9">
    <property type="interactions" value="1429"/>
</dbReference>
<dbReference type="STRING" id="10090.ENSMUSP00000097793"/>
<dbReference type="iPTMnet" id="Q3UHX9"/>
<dbReference type="PhosphoSitePlus" id="Q3UHX9"/>
<dbReference type="SwissPalm" id="Q3UHX9"/>
<dbReference type="jPOST" id="Q3UHX9"/>
<dbReference type="PaxDb" id="10090-ENSMUSP00000097793"/>
<dbReference type="PeptideAtlas" id="Q3UHX9"/>
<dbReference type="ProteomicsDB" id="285445">
    <molecule id="Q3UHX9-1"/>
</dbReference>
<dbReference type="ProteomicsDB" id="285446">
    <molecule id="Q3UHX9-2"/>
</dbReference>
<dbReference type="Pumba" id="Q3UHX9"/>
<dbReference type="Antibodypedia" id="17713">
    <property type="antibodies" value="48 antibodies from 12 providers"/>
</dbReference>
<dbReference type="DNASU" id="227695"/>
<dbReference type="Ensembl" id="ENSMUST00000100220.5">
    <molecule id="Q3UHX9-1"/>
    <property type="protein sequence ID" value="ENSMUSP00000097793.5"/>
    <property type="gene ID" value="ENSMUSG00000039660.17"/>
</dbReference>
<dbReference type="GeneID" id="227695"/>
<dbReference type="KEGG" id="mmu:227695"/>
<dbReference type="UCSC" id="uc008jbl.2">
    <molecule id="Q3UHX9-1"/>
    <property type="organism name" value="mouse"/>
</dbReference>
<dbReference type="AGR" id="MGI:106544"/>
<dbReference type="CTD" id="51490"/>
<dbReference type="MGI" id="MGI:106544">
    <property type="gene designation" value="Spout1"/>
</dbReference>
<dbReference type="VEuPathDB" id="HostDB:ENSMUSG00000039660"/>
<dbReference type="eggNOG" id="KOG3925">
    <property type="taxonomic scope" value="Eukaryota"/>
</dbReference>
<dbReference type="GeneTree" id="ENSGT00390000016537"/>
<dbReference type="HOGENOM" id="CLU_017233_4_0_1"/>
<dbReference type="InParanoid" id="Q3UHX9"/>
<dbReference type="OMA" id="FFPIHKD"/>
<dbReference type="OrthoDB" id="361029at2759"/>
<dbReference type="PhylomeDB" id="Q3UHX9"/>
<dbReference type="TreeFam" id="TF105821"/>
<dbReference type="BioGRID-ORCS" id="227695">
    <property type="hits" value="25 hits in 77 CRISPR screens"/>
</dbReference>
<dbReference type="ChiTaRS" id="Spout1">
    <property type="organism name" value="mouse"/>
</dbReference>
<dbReference type="PRO" id="PR:Q3UHX9"/>
<dbReference type="Proteomes" id="UP000000589">
    <property type="component" value="Chromosome 2"/>
</dbReference>
<dbReference type="RNAct" id="Q3UHX9">
    <property type="molecule type" value="protein"/>
</dbReference>
<dbReference type="Bgee" id="ENSMUSG00000039660">
    <property type="expression patterns" value="Expressed in spermatid and 190 other cell types or tissues"/>
</dbReference>
<dbReference type="GO" id="GO:0005737">
    <property type="term" value="C:cytoplasm"/>
    <property type="evidence" value="ECO:0007669"/>
    <property type="project" value="UniProtKB-KW"/>
</dbReference>
<dbReference type="GO" id="GO:0000776">
    <property type="term" value="C:kinetochore"/>
    <property type="evidence" value="ECO:0000250"/>
    <property type="project" value="UniProtKB"/>
</dbReference>
<dbReference type="GO" id="GO:0072686">
    <property type="term" value="C:mitotic spindle"/>
    <property type="evidence" value="ECO:0000250"/>
    <property type="project" value="UniProtKB"/>
</dbReference>
<dbReference type="GO" id="GO:0031616">
    <property type="term" value="C:spindle pole centrosome"/>
    <property type="evidence" value="ECO:0000250"/>
    <property type="project" value="UniProtKB"/>
</dbReference>
<dbReference type="GO" id="GO:0035198">
    <property type="term" value="F:miRNA binding"/>
    <property type="evidence" value="ECO:0000250"/>
    <property type="project" value="UniProtKB"/>
</dbReference>
<dbReference type="GO" id="GO:0070042">
    <property type="term" value="F:rRNA (uridine-N3-)-methyltransferase activity"/>
    <property type="evidence" value="ECO:0000250"/>
    <property type="project" value="UniProtKB"/>
</dbReference>
<dbReference type="GO" id="GO:1904047">
    <property type="term" value="F:S-adenosyl-L-methionine binding"/>
    <property type="evidence" value="ECO:0000250"/>
    <property type="project" value="UniProtKB"/>
</dbReference>
<dbReference type="GO" id="GO:0051301">
    <property type="term" value="P:cell division"/>
    <property type="evidence" value="ECO:0007669"/>
    <property type="project" value="UniProtKB-KW"/>
</dbReference>
<dbReference type="GO" id="GO:0051661">
    <property type="term" value="P:maintenance of centrosome location"/>
    <property type="evidence" value="ECO:0000250"/>
    <property type="project" value="UniProtKB"/>
</dbReference>
<dbReference type="GO" id="GO:0035196">
    <property type="term" value="P:miRNA processing"/>
    <property type="evidence" value="ECO:0000250"/>
    <property type="project" value="UniProtKB"/>
</dbReference>
<dbReference type="GO" id="GO:0010608">
    <property type="term" value="P:post-transcriptional regulation of gene expression"/>
    <property type="evidence" value="ECO:0000250"/>
    <property type="project" value="UniProtKB"/>
</dbReference>
<dbReference type="GO" id="GO:0070475">
    <property type="term" value="P:rRNA base methylation"/>
    <property type="evidence" value="ECO:0000250"/>
    <property type="project" value="UniProtKB"/>
</dbReference>
<dbReference type="CDD" id="cd18086">
    <property type="entry name" value="HsC9orf114-like"/>
    <property type="match status" value="1"/>
</dbReference>
<dbReference type="FunFam" id="2.40.50.140:FF:000170">
    <property type="entry name" value="SPOUT domain containing methyltransferase 1"/>
    <property type="match status" value="1"/>
</dbReference>
<dbReference type="Gene3D" id="3.40.1280.10">
    <property type="match status" value="1"/>
</dbReference>
<dbReference type="Gene3D" id="2.40.50.140">
    <property type="entry name" value="Nucleic acid-binding proteins"/>
    <property type="match status" value="1"/>
</dbReference>
<dbReference type="InterPro" id="IPR029028">
    <property type="entry name" value="Alpha/beta_knot_MTases"/>
</dbReference>
<dbReference type="InterPro" id="IPR012340">
    <property type="entry name" value="NA-bd_OB-fold"/>
</dbReference>
<dbReference type="InterPro" id="IPR003750">
    <property type="entry name" value="Put_MeTrfase-C9orf114-like"/>
</dbReference>
<dbReference type="InterPro" id="IPR029026">
    <property type="entry name" value="tRNA_m1G_MTases_N"/>
</dbReference>
<dbReference type="PANTHER" id="PTHR12150">
    <property type="entry name" value="CLASS IV SAM-BINDING METHYLTRANSFERASE-RELATED"/>
    <property type="match status" value="1"/>
</dbReference>
<dbReference type="PANTHER" id="PTHR12150:SF13">
    <property type="entry name" value="METHYLTRANSFERASE C9ORF114-RELATED"/>
    <property type="match status" value="1"/>
</dbReference>
<dbReference type="Pfam" id="PF02598">
    <property type="entry name" value="Methyltrn_RNA_3"/>
    <property type="match status" value="1"/>
</dbReference>
<dbReference type="SUPFAM" id="SSF75217">
    <property type="entry name" value="alpha/beta knot"/>
    <property type="match status" value="1"/>
</dbReference>
<dbReference type="SUPFAM" id="SSF50249">
    <property type="entry name" value="Nucleic acid-binding proteins"/>
    <property type="match status" value="1"/>
</dbReference>
<reference key="1">
    <citation type="journal article" date="2005" name="Science">
        <title>The transcriptional landscape of the mammalian genome.</title>
        <authorList>
            <person name="Carninci P."/>
            <person name="Kasukawa T."/>
            <person name="Katayama S."/>
            <person name="Gough J."/>
            <person name="Frith M.C."/>
            <person name="Maeda N."/>
            <person name="Oyama R."/>
            <person name="Ravasi T."/>
            <person name="Lenhard B."/>
            <person name="Wells C."/>
            <person name="Kodzius R."/>
            <person name="Shimokawa K."/>
            <person name="Bajic V.B."/>
            <person name="Brenner S.E."/>
            <person name="Batalov S."/>
            <person name="Forrest A.R."/>
            <person name="Zavolan M."/>
            <person name="Davis M.J."/>
            <person name="Wilming L.G."/>
            <person name="Aidinis V."/>
            <person name="Allen J.E."/>
            <person name="Ambesi-Impiombato A."/>
            <person name="Apweiler R."/>
            <person name="Aturaliya R.N."/>
            <person name="Bailey T.L."/>
            <person name="Bansal M."/>
            <person name="Baxter L."/>
            <person name="Beisel K.W."/>
            <person name="Bersano T."/>
            <person name="Bono H."/>
            <person name="Chalk A.M."/>
            <person name="Chiu K.P."/>
            <person name="Choudhary V."/>
            <person name="Christoffels A."/>
            <person name="Clutterbuck D.R."/>
            <person name="Crowe M.L."/>
            <person name="Dalla E."/>
            <person name="Dalrymple B.P."/>
            <person name="de Bono B."/>
            <person name="Della Gatta G."/>
            <person name="di Bernardo D."/>
            <person name="Down T."/>
            <person name="Engstrom P."/>
            <person name="Fagiolini M."/>
            <person name="Faulkner G."/>
            <person name="Fletcher C.F."/>
            <person name="Fukushima T."/>
            <person name="Furuno M."/>
            <person name="Futaki S."/>
            <person name="Gariboldi M."/>
            <person name="Georgii-Hemming P."/>
            <person name="Gingeras T.R."/>
            <person name="Gojobori T."/>
            <person name="Green R.E."/>
            <person name="Gustincich S."/>
            <person name="Harbers M."/>
            <person name="Hayashi Y."/>
            <person name="Hensch T.K."/>
            <person name="Hirokawa N."/>
            <person name="Hill D."/>
            <person name="Huminiecki L."/>
            <person name="Iacono M."/>
            <person name="Ikeo K."/>
            <person name="Iwama A."/>
            <person name="Ishikawa T."/>
            <person name="Jakt M."/>
            <person name="Kanapin A."/>
            <person name="Katoh M."/>
            <person name="Kawasawa Y."/>
            <person name="Kelso J."/>
            <person name="Kitamura H."/>
            <person name="Kitano H."/>
            <person name="Kollias G."/>
            <person name="Krishnan S.P."/>
            <person name="Kruger A."/>
            <person name="Kummerfeld S.K."/>
            <person name="Kurochkin I.V."/>
            <person name="Lareau L.F."/>
            <person name="Lazarevic D."/>
            <person name="Lipovich L."/>
            <person name="Liu J."/>
            <person name="Liuni S."/>
            <person name="McWilliam S."/>
            <person name="Madan Babu M."/>
            <person name="Madera M."/>
            <person name="Marchionni L."/>
            <person name="Matsuda H."/>
            <person name="Matsuzawa S."/>
            <person name="Miki H."/>
            <person name="Mignone F."/>
            <person name="Miyake S."/>
            <person name="Morris K."/>
            <person name="Mottagui-Tabar S."/>
            <person name="Mulder N."/>
            <person name="Nakano N."/>
            <person name="Nakauchi H."/>
            <person name="Ng P."/>
            <person name="Nilsson R."/>
            <person name="Nishiguchi S."/>
            <person name="Nishikawa S."/>
            <person name="Nori F."/>
            <person name="Ohara O."/>
            <person name="Okazaki Y."/>
            <person name="Orlando V."/>
            <person name="Pang K.C."/>
            <person name="Pavan W.J."/>
            <person name="Pavesi G."/>
            <person name="Pesole G."/>
            <person name="Petrovsky N."/>
            <person name="Piazza S."/>
            <person name="Reed J."/>
            <person name="Reid J.F."/>
            <person name="Ring B.Z."/>
            <person name="Ringwald M."/>
            <person name="Rost B."/>
            <person name="Ruan Y."/>
            <person name="Salzberg S.L."/>
            <person name="Sandelin A."/>
            <person name="Schneider C."/>
            <person name="Schoenbach C."/>
            <person name="Sekiguchi K."/>
            <person name="Semple C.A."/>
            <person name="Seno S."/>
            <person name="Sessa L."/>
            <person name="Sheng Y."/>
            <person name="Shibata Y."/>
            <person name="Shimada H."/>
            <person name="Shimada K."/>
            <person name="Silva D."/>
            <person name="Sinclair B."/>
            <person name="Sperling S."/>
            <person name="Stupka E."/>
            <person name="Sugiura K."/>
            <person name="Sultana R."/>
            <person name="Takenaka Y."/>
            <person name="Taki K."/>
            <person name="Tammoja K."/>
            <person name="Tan S.L."/>
            <person name="Tang S."/>
            <person name="Taylor M.S."/>
            <person name="Tegner J."/>
            <person name="Teichmann S.A."/>
            <person name="Ueda H.R."/>
            <person name="van Nimwegen E."/>
            <person name="Verardo R."/>
            <person name="Wei C.L."/>
            <person name="Yagi K."/>
            <person name="Yamanishi H."/>
            <person name="Zabarovsky E."/>
            <person name="Zhu S."/>
            <person name="Zimmer A."/>
            <person name="Hide W."/>
            <person name="Bult C."/>
            <person name="Grimmond S.M."/>
            <person name="Teasdale R.D."/>
            <person name="Liu E.T."/>
            <person name="Brusic V."/>
            <person name="Quackenbush J."/>
            <person name="Wahlestedt C."/>
            <person name="Mattick J.S."/>
            <person name="Hume D.A."/>
            <person name="Kai C."/>
            <person name="Sasaki D."/>
            <person name="Tomaru Y."/>
            <person name="Fukuda S."/>
            <person name="Kanamori-Katayama M."/>
            <person name="Suzuki M."/>
            <person name="Aoki J."/>
            <person name="Arakawa T."/>
            <person name="Iida J."/>
            <person name="Imamura K."/>
            <person name="Itoh M."/>
            <person name="Kato T."/>
            <person name="Kawaji H."/>
            <person name="Kawagashira N."/>
            <person name="Kawashima T."/>
            <person name="Kojima M."/>
            <person name="Kondo S."/>
            <person name="Konno H."/>
            <person name="Nakano K."/>
            <person name="Ninomiya N."/>
            <person name="Nishio T."/>
            <person name="Okada M."/>
            <person name="Plessy C."/>
            <person name="Shibata K."/>
            <person name="Shiraki T."/>
            <person name="Suzuki S."/>
            <person name="Tagami M."/>
            <person name="Waki K."/>
            <person name="Watahiki A."/>
            <person name="Okamura-Oho Y."/>
            <person name="Suzuki H."/>
            <person name="Kawai J."/>
            <person name="Hayashizaki Y."/>
        </authorList>
    </citation>
    <scope>NUCLEOTIDE SEQUENCE [LARGE SCALE MRNA] (ISOFORMS 1 AND 2)</scope>
    <source>
        <strain>C57BL/6J</strain>
        <tissue>Corpora quadrigemina</tissue>
        <tissue>Kidney</tissue>
    </source>
</reference>
<reference key="2">
    <citation type="journal article" date="2010" name="Cell">
        <title>A tissue-specific atlas of mouse protein phosphorylation and expression.</title>
        <authorList>
            <person name="Huttlin E.L."/>
            <person name="Jedrychowski M.P."/>
            <person name="Elias J.E."/>
            <person name="Goswami T."/>
            <person name="Rad R."/>
            <person name="Beausoleil S.A."/>
            <person name="Villen J."/>
            <person name="Haas W."/>
            <person name="Sowa M.E."/>
            <person name="Gygi S.P."/>
        </authorList>
    </citation>
    <scope>IDENTIFICATION BY MASS SPECTROMETRY [LARGE SCALE ANALYSIS]</scope>
    <source>
        <tissue>Brain</tissue>
        <tissue>Spleen</tissue>
        <tissue>Testis</tissue>
    </source>
</reference>
<proteinExistence type="evidence at protein level"/>
<organism>
    <name type="scientific">Mus musculus</name>
    <name type="common">Mouse</name>
    <dbReference type="NCBI Taxonomy" id="10090"/>
    <lineage>
        <taxon>Eukaryota</taxon>
        <taxon>Metazoa</taxon>
        <taxon>Chordata</taxon>
        <taxon>Craniata</taxon>
        <taxon>Vertebrata</taxon>
        <taxon>Euteleostomi</taxon>
        <taxon>Mammalia</taxon>
        <taxon>Eutheria</taxon>
        <taxon>Euarchontoglires</taxon>
        <taxon>Glires</taxon>
        <taxon>Rodentia</taxon>
        <taxon>Myomorpha</taxon>
        <taxon>Muroidea</taxon>
        <taxon>Muridae</taxon>
        <taxon>Murinae</taxon>
        <taxon>Mus</taxon>
        <taxon>Mus</taxon>
    </lineage>
</organism>